<evidence type="ECO:0000255" key="1">
    <source>
        <dbReference type="HAMAP-Rule" id="MF_01358"/>
    </source>
</evidence>
<comment type="function">
    <text evidence="1">NDH-1 shuttles electrons from an unknown electron donor, via FMN and iron-sulfur (Fe-S) centers, to quinones in the respiratory and/or the photosynthetic chain. The immediate electron acceptor for the enzyme in this species is believed to be plastoquinone. Couples the redox reaction to proton translocation, and thus conserves the redox energy in a proton gradient. Cyanobacterial NDH-1 also plays a role in inorganic carbon-concentration.</text>
</comment>
<comment type="catalytic activity">
    <reaction evidence="1">
        <text>a plastoquinone + NADH + (n+1) H(+)(in) = a plastoquinol + NAD(+) + n H(+)(out)</text>
        <dbReference type="Rhea" id="RHEA:42608"/>
        <dbReference type="Rhea" id="RHEA-COMP:9561"/>
        <dbReference type="Rhea" id="RHEA-COMP:9562"/>
        <dbReference type="ChEBI" id="CHEBI:15378"/>
        <dbReference type="ChEBI" id="CHEBI:17757"/>
        <dbReference type="ChEBI" id="CHEBI:57540"/>
        <dbReference type="ChEBI" id="CHEBI:57945"/>
        <dbReference type="ChEBI" id="CHEBI:62192"/>
    </reaction>
</comment>
<comment type="catalytic activity">
    <reaction evidence="1">
        <text>a plastoquinone + NADPH + (n+1) H(+)(in) = a plastoquinol + NADP(+) + n H(+)(out)</text>
        <dbReference type="Rhea" id="RHEA:42612"/>
        <dbReference type="Rhea" id="RHEA-COMP:9561"/>
        <dbReference type="Rhea" id="RHEA-COMP:9562"/>
        <dbReference type="ChEBI" id="CHEBI:15378"/>
        <dbReference type="ChEBI" id="CHEBI:17757"/>
        <dbReference type="ChEBI" id="CHEBI:57783"/>
        <dbReference type="ChEBI" id="CHEBI:58349"/>
        <dbReference type="ChEBI" id="CHEBI:62192"/>
    </reaction>
</comment>
<comment type="subunit">
    <text evidence="1">NDH-1 can be composed of about 15 different subunits; different subcomplexes with different compositions have been identified which probably have different functions.</text>
</comment>
<comment type="subcellular location">
    <subcellularLocation>
        <location evidence="1">Cellular thylakoid membrane</location>
        <topology evidence="1">Peripheral membrane protein</topology>
        <orientation evidence="1">Cytoplasmic side</orientation>
    </subcellularLocation>
</comment>
<comment type="similarity">
    <text evidence="1">Belongs to the complex I 49 kDa subunit family.</text>
</comment>
<proteinExistence type="inferred from homology"/>
<dbReference type="EC" id="7.1.1.-" evidence="1"/>
<dbReference type="EMBL" id="CP000828">
    <property type="protein sequence ID" value="ABW28327.1"/>
    <property type="molecule type" value="Genomic_DNA"/>
</dbReference>
<dbReference type="RefSeq" id="WP_010472570.1">
    <property type="nucleotide sequence ID" value="NC_009925.1"/>
</dbReference>
<dbReference type="SMR" id="B0BZ27"/>
<dbReference type="STRING" id="329726.AM1_3333"/>
<dbReference type="KEGG" id="amr:AM1_3333"/>
<dbReference type="eggNOG" id="COG0649">
    <property type="taxonomic scope" value="Bacteria"/>
</dbReference>
<dbReference type="HOGENOM" id="CLU_015134_1_2_3"/>
<dbReference type="OrthoDB" id="9801496at2"/>
<dbReference type="Proteomes" id="UP000000268">
    <property type="component" value="Chromosome"/>
</dbReference>
<dbReference type="GO" id="GO:0031676">
    <property type="term" value="C:plasma membrane-derived thylakoid membrane"/>
    <property type="evidence" value="ECO:0007669"/>
    <property type="project" value="UniProtKB-SubCell"/>
</dbReference>
<dbReference type="GO" id="GO:0051287">
    <property type="term" value="F:NAD binding"/>
    <property type="evidence" value="ECO:0007669"/>
    <property type="project" value="InterPro"/>
</dbReference>
<dbReference type="GO" id="GO:0016655">
    <property type="term" value="F:oxidoreductase activity, acting on NAD(P)H, quinone or similar compound as acceptor"/>
    <property type="evidence" value="ECO:0007669"/>
    <property type="project" value="UniProtKB-UniRule"/>
</dbReference>
<dbReference type="GO" id="GO:0048038">
    <property type="term" value="F:quinone binding"/>
    <property type="evidence" value="ECO:0007669"/>
    <property type="project" value="UniProtKB-KW"/>
</dbReference>
<dbReference type="GO" id="GO:0019684">
    <property type="term" value="P:photosynthesis, light reaction"/>
    <property type="evidence" value="ECO:0007669"/>
    <property type="project" value="UniProtKB-UniRule"/>
</dbReference>
<dbReference type="Gene3D" id="1.10.645.10">
    <property type="entry name" value="Cytochrome-c3 Hydrogenase, chain B"/>
    <property type="match status" value="1"/>
</dbReference>
<dbReference type="HAMAP" id="MF_01358">
    <property type="entry name" value="NDH1_NuoD"/>
    <property type="match status" value="1"/>
</dbReference>
<dbReference type="InterPro" id="IPR001135">
    <property type="entry name" value="NADH_Q_OxRdtase_suD"/>
</dbReference>
<dbReference type="InterPro" id="IPR014029">
    <property type="entry name" value="NADH_UbQ_OxRdtase_49kDa_CS"/>
</dbReference>
<dbReference type="InterPro" id="IPR022885">
    <property type="entry name" value="NDH1_su_D/H"/>
</dbReference>
<dbReference type="InterPro" id="IPR029014">
    <property type="entry name" value="NiFe-Hase_large"/>
</dbReference>
<dbReference type="NCBIfam" id="NF004739">
    <property type="entry name" value="PRK06075.1"/>
    <property type="match status" value="1"/>
</dbReference>
<dbReference type="NCBIfam" id="NF005649">
    <property type="entry name" value="PRK07415.1"/>
    <property type="match status" value="1"/>
</dbReference>
<dbReference type="PANTHER" id="PTHR11993:SF10">
    <property type="entry name" value="NADH DEHYDROGENASE [UBIQUINONE] IRON-SULFUR PROTEIN 2, MITOCHONDRIAL"/>
    <property type="match status" value="1"/>
</dbReference>
<dbReference type="PANTHER" id="PTHR11993">
    <property type="entry name" value="NADH-UBIQUINONE OXIDOREDUCTASE 49 KDA SUBUNIT"/>
    <property type="match status" value="1"/>
</dbReference>
<dbReference type="Pfam" id="PF00346">
    <property type="entry name" value="Complex1_49kDa"/>
    <property type="match status" value="1"/>
</dbReference>
<dbReference type="SUPFAM" id="SSF56762">
    <property type="entry name" value="HydB/Nqo4-like"/>
    <property type="match status" value="1"/>
</dbReference>
<dbReference type="PROSITE" id="PS00535">
    <property type="entry name" value="COMPLEX1_49K"/>
    <property type="match status" value="1"/>
</dbReference>
<reference key="1">
    <citation type="journal article" date="2008" name="Proc. Natl. Acad. Sci. U.S.A.">
        <title>Niche adaptation and genome expansion in the chlorophyll d-producing cyanobacterium Acaryochloris marina.</title>
        <authorList>
            <person name="Swingley W.D."/>
            <person name="Chen M."/>
            <person name="Cheung P.C."/>
            <person name="Conrad A.L."/>
            <person name="Dejesa L.C."/>
            <person name="Hao J."/>
            <person name="Honchak B.M."/>
            <person name="Karbach L.E."/>
            <person name="Kurdoglu A."/>
            <person name="Lahiri S."/>
            <person name="Mastrian S.D."/>
            <person name="Miyashita H."/>
            <person name="Page L."/>
            <person name="Ramakrishna P."/>
            <person name="Satoh S."/>
            <person name="Sattley W.M."/>
            <person name="Shimada Y."/>
            <person name="Taylor H.L."/>
            <person name="Tomo T."/>
            <person name="Tsuchiya T."/>
            <person name="Wang Z.T."/>
            <person name="Raymond J."/>
            <person name="Mimuro M."/>
            <person name="Blankenship R.E."/>
            <person name="Touchman J.W."/>
        </authorList>
    </citation>
    <scope>NUCLEOTIDE SEQUENCE [LARGE SCALE GENOMIC DNA]</scope>
    <source>
        <strain>MBIC 11017</strain>
    </source>
</reference>
<keyword id="KW-0472">Membrane</keyword>
<keyword id="KW-0520">NAD</keyword>
<keyword id="KW-0521">NADP</keyword>
<keyword id="KW-0618">Plastoquinone</keyword>
<keyword id="KW-0874">Quinone</keyword>
<keyword id="KW-1185">Reference proteome</keyword>
<keyword id="KW-0793">Thylakoid</keyword>
<keyword id="KW-1278">Translocase</keyword>
<keyword id="KW-0813">Transport</keyword>
<name>NDHH_ACAM1</name>
<accession>B0BZ27</accession>
<feature type="chain" id="PRO_0000371811" description="NAD(P)H-quinone oxidoreductase subunit H">
    <location>
        <begin position="1"/>
        <end position="394"/>
    </location>
</feature>
<protein>
    <recommendedName>
        <fullName evidence="1">NAD(P)H-quinone oxidoreductase subunit H</fullName>
        <ecNumber evidence="1">7.1.1.-</ecNumber>
    </recommendedName>
    <alternativeName>
        <fullName>NAD(P)H dehydrogenase subunit H</fullName>
    </alternativeName>
    <alternativeName>
        <fullName evidence="1">NADH-plastoquinone oxidoreductase subunit H</fullName>
    </alternativeName>
    <alternativeName>
        <fullName evidence="1">NDH-1 subunit H</fullName>
        <shortName evidence="1">NDH-H</shortName>
    </alternativeName>
</protein>
<sequence length="394" mass="45572">MPTIETRTEPMVINMGPQHPSMHGVLRLMVTLDGENVVDCEPVIGYLHRGMEKIAESRSNIMFVPYVSRWDYAAGMFNEAITVNAPERLADIKVPKRASYIRVIMLELNRIANHLLWLGPFLADVGAQTPFFYIFREREMIYDLFEAVSGMRFINNNYFRMGGVAADLTYGWVSKCLDFCDYFLPKVDEYERLITNNPIFIRRLDGVGTISREDAINWGLSGPMLRGSGVKWDLRRVDHYECYDDFDWEVQWETKGDCLARYYLRIREMRESVKIIKQALEHLPGGPYENLEAKRMMEGRKSEWNSFEYQFLGKKLAPTFKIPEGELYARVETGKGELGIYLIGDENVFPWRWKIRAPDFNNLQVLPQLLKGMKVADIVAILGSIDVIMGSVDR</sequence>
<gene>
    <name evidence="1" type="primary">ndhH</name>
    <name type="ordered locus">AM1_3333</name>
</gene>
<organism>
    <name type="scientific">Acaryochloris marina (strain MBIC 11017)</name>
    <dbReference type="NCBI Taxonomy" id="329726"/>
    <lineage>
        <taxon>Bacteria</taxon>
        <taxon>Bacillati</taxon>
        <taxon>Cyanobacteriota</taxon>
        <taxon>Cyanophyceae</taxon>
        <taxon>Acaryochloridales</taxon>
        <taxon>Acaryochloridaceae</taxon>
        <taxon>Acaryochloris</taxon>
    </lineage>
</organism>